<organism>
    <name type="scientific">Streptomyces rimosus</name>
    <dbReference type="NCBI Taxonomy" id="1927"/>
    <lineage>
        <taxon>Bacteria</taxon>
        <taxon>Bacillati</taxon>
        <taxon>Actinomycetota</taxon>
        <taxon>Actinomycetes</taxon>
        <taxon>Kitasatosporales</taxon>
        <taxon>Streptomycetaceae</taxon>
        <taxon>Streptomyces</taxon>
    </lineage>
</organism>
<proteinExistence type="inferred from homology"/>
<reference key="1">
    <citation type="journal article" date="1991" name="Mol. Microbiol.">
        <title>Characterization of an oxytetracycline-resistance gene, otrA, of Streptomyces rimosus.</title>
        <authorList>
            <person name="Doyle D."/>
            <person name="McDowall K.J."/>
            <person name="Butler M.J."/>
            <person name="Hunter I.S."/>
        </authorList>
    </citation>
    <scope>NUCLEOTIDE SEQUENCE [GENOMIC DNA]</scope>
    <source>
        <strain>15883R</strain>
    </source>
</reference>
<comment type="function">
    <text>Abolishes the inhibitory effect of oxytetracycline on protein synthesis by a non-covalent modification of the ribosomes.</text>
</comment>
<comment type="similarity">
    <text evidence="2">Belongs to the TRAFAC class translation factor GTPase superfamily. Classic translation factor GTPase family. TetM/TetO subfamily.</text>
</comment>
<protein>
    <recommendedName>
        <fullName>Oxytetracycline resistance protein</fullName>
    </recommendedName>
</protein>
<sequence length="663" mass="71786">MNKLNLGILAHVDAGKTSLTERLLHRTGVIDEVGSVDAGTTTTDSMELERQRGITIRSAVATFVLDDLKVNLIDTPGHSDFISEVERALGVLDGAVLVVSAVEGVQPQTRILMRTLRRLGIPTLVFVNKIDRGGARPDGVLREIRDRLTPAAVALSAVADAGTPRARAIALGPDTDPDFAVRVGELLADHDDAFLTAYLDEEHVLTEKEYAEELAAQTARGLVHPVYFGSALTGEGLDHLVHGIRELLPSVHASQDAPLRATVFKVDRGARGEAVAYLRLVSGTLGTRDSVTLHRVDHTGRVTEHAGRITALRVFEHGSATSETRATAGDIAQAWGLKDVRVGDRAGHLDGPPPRNFFAPPSLETVIRPERPEEAGRLHAALRMLDEQDPSIDLRQDEENAAGAVVRLYGEVQKEILGSTLAESFGVRVRFDPTRTVCIEKPVGTGEALIELDTRTHNYFWGAPWVCASDRPSPARAITFRLAVELGSLPLAFHKAIEETVHTTLRHGLYGWQVTDCAVTLTRTGVRSPVSAADDFRKANARLVLMDALGRAGTEVHEPVSSFELEVPAARLSPVLAKLAELGATPGVPTAEGDVFRLEGTMPTSLVHDFNQRVPGLTQGEGVFLAEHRGYRPAVGQPPVRPRPEGPNPLNRDEYILHVLKRV</sequence>
<keyword id="KW-0046">Antibiotic resistance</keyword>
<keyword id="KW-0342">GTP-binding</keyword>
<keyword id="KW-0547">Nucleotide-binding</keyword>
<keyword id="KW-0648">Protein biosynthesis</keyword>
<accession>Q55002</accession>
<gene>
    <name type="primary">otrA</name>
</gene>
<name>OTRA_STRRM</name>
<feature type="chain" id="PRO_0000091517" description="Oxytetracycline resistance protein">
    <location>
        <begin position="1"/>
        <end position="663"/>
    </location>
</feature>
<feature type="domain" description="tr-type G" evidence="2">
    <location>
        <begin position="1"/>
        <end position="252"/>
    </location>
</feature>
<feature type="binding site" evidence="1">
    <location>
        <begin position="10"/>
        <end position="17"/>
    </location>
    <ligand>
        <name>GTP</name>
        <dbReference type="ChEBI" id="CHEBI:37565"/>
    </ligand>
</feature>
<feature type="binding site" evidence="1">
    <location>
        <begin position="74"/>
        <end position="78"/>
    </location>
    <ligand>
        <name>GTP</name>
        <dbReference type="ChEBI" id="CHEBI:37565"/>
    </ligand>
</feature>
<feature type="binding site" evidence="1">
    <location>
        <begin position="128"/>
        <end position="131"/>
    </location>
    <ligand>
        <name>GTP</name>
        <dbReference type="ChEBI" id="CHEBI:37565"/>
    </ligand>
</feature>
<dbReference type="EMBL" id="X53401">
    <property type="protein sequence ID" value="CAA37477.1"/>
    <property type="molecule type" value="Genomic_DNA"/>
</dbReference>
<dbReference type="PIR" id="S18572">
    <property type="entry name" value="S18572"/>
</dbReference>
<dbReference type="RefSeq" id="WP_063854497.1">
    <property type="nucleotide sequence ID" value="NG_048026.1"/>
</dbReference>
<dbReference type="SMR" id="Q55002"/>
<dbReference type="CARD" id="ARO:3002891">
    <property type="molecule name" value="otr(A)S.rim"/>
    <property type="mechanism identifier" value="ARO:0001003"/>
    <property type="mechanism name" value="antibiotic target protection"/>
</dbReference>
<dbReference type="KEGG" id="ag:CAA37477"/>
<dbReference type="GO" id="GO:0005525">
    <property type="term" value="F:GTP binding"/>
    <property type="evidence" value="ECO:0007669"/>
    <property type="project" value="UniProtKB-KW"/>
</dbReference>
<dbReference type="GO" id="GO:0003924">
    <property type="term" value="F:GTPase activity"/>
    <property type="evidence" value="ECO:0007669"/>
    <property type="project" value="InterPro"/>
</dbReference>
<dbReference type="GO" id="GO:0046677">
    <property type="term" value="P:response to antibiotic"/>
    <property type="evidence" value="ECO:0007669"/>
    <property type="project" value="UniProtKB-KW"/>
</dbReference>
<dbReference type="GO" id="GO:0032790">
    <property type="term" value="P:ribosome disassembly"/>
    <property type="evidence" value="ECO:0007669"/>
    <property type="project" value="TreeGrafter"/>
</dbReference>
<dbReference type="GO" id="GO:0006412">
    <property type="term" value="P:translation"/>
    <property type="evidence" value="ECO:0007669"/>
    <property type="project" value="UniProtKB-KW"/>
</dbReference>
<dbReference type="CDD" id="cd03711">
    <property type="entry name" value="Tet_C"/>
    <property type="match status" value="1"/>
</dbReference>
<dbReference type="CDD" id="cd03690">
    <property type="entry name" value="Tet_II"/>
    <property type="match status" value="1"/>
</dbReference>
<dbReference type="CDD" id="cd16258">
    <property type="entry name" value="Tet_III"/>
    <property type="match status" value="1"/>
</dbReference>
<dbReference type="CDD" id="cd04168">
    <property type="entry name" value="TetM_like"/>
    <property type="match status" value="1"/>
</dbReference>
<dbReference type="FunFam" id="3.40.50.300:FF:002549">
    <property type="entry name" value="Tetracycline resistance protein, GTP-binding elongation family"/>
    <property type="match status" value="1"/>
</dbReference>
<dbReference type="Gene3D" id="3.30.230.10">
    <property type="match status" value="1"/>
</dbReference>
<dbReference type="Gene3D" id="3.30.70.870">
    <property type="entry name" value="Elongation Factor G (Translational Gtpase), domain 3"/>
    <property type="match status" value="1"/>
</dbReference>
<dbReference type="Gene3D" id="3.40.50.300">
    <property type="entry name" value="P-loop containing nucleotide triphosphate hydrolases"/>
    <property type="match status" value="1"/>
</dbReference>
<dbReference type="Gene3D" id="2.40.30.10">
    <property type="entry name" value="Translation factors"/>
    <property type="match status" value="1"/>
</dbReference>
<dbReference type="InterPro" id="IPR035647">
    <property type="entry name" value="EFG_III/V"/>
</dbReference>
<dbReference type="InterPro" id="IPR000640">
    <property type="entry name" value="EFG_V-like"/>
</dbReference>
<dbReference type="InterPro" id="IPR031157">
    <property type="entry name" value="G_TR_CS"/>
</dbReference>
<dbReference type="InterPro" id="IPR027417">
    <property type="entry name" value="P-loop_NTPase"/>
</dbReference>
<dbReference type="InterPro" id="IPR020568">
    <property type="entry name" value="Ribosomal_Su5_D2-typ_SF"/>
</dbReference>
<dbReference type="InterPro" id="IPR014721">
    <property type="entry name" value="Ribsml_uS5_D2-typ_fold_subgr"/>
</dbReference>
<dbReference type="InterPro" id="IPR005225">
    <property type="entry name" value="Small_GTP-bd"/>
</dbReference>
<dbReference type="InterPro" id="IPR000795">
    <property type="entry name" value="T_Tr_GTP-bd_dom"/>
</dbReference>
<dbReference type="InterPro" id="IPR035650">
    <property type="entry name" value="Tet_C"/>
</dbReference>
<dbReference type="InterPro" id="IPR009000">
    <property type="entry name" value="Transl_B-barrel_sf"/>
</dbReference>
<dbReference type="InterPro" id="IPR005517">
    <property type="entry name" value="Transl_elong_EFG/EF2_IV"/>
</dbReference>
<dbReference type="NCBIfam" id="NF000120">
    <property type="entry name" value="47473_otr"/>
    <property type="match status" value="1"/>
</dbReference>
<dbReference type="NCBIfam" id="TIGR00231">
    <property type="entry name" value="small_GTP"/>
    <property type="match status" value="1"/>
</dbReference>
<dbReference type="NCBIfam" id="NF012153">
    <property type="entry name" value="tet_protect"/>
    <property type="match status" value="1"/>
</dbReference>
<dbReference type="PANTHER" id="PTHR43261:SF1">
    <property type="entry name" value="RIBOSOME-RELEASING FACTOR 2, MITOCHONDRIAL"/>
    <property type="match status" value="1"/>
</dbReference>
<dbReference type="PANTHER" id="PTHR43261">
    <property type="entry name" value="TRANSLATION ELONGATION FACTOR G-RELATED"/>
    <property type="match status" value="1"/>
</dbReference>
<dbReference type="Pfam" id="PF00679">
    <property type="entry name" value="EFG_C"/>
    <property type="match status" value="1"/>
</dbReference>
<dbReference type="Pfam" id="PF03764">
    <property type="entry name" value="EFG_IV"/>
    <property type="match status" value="1"/>
</dbReference>
<dbReference type="Pfam" id="PF00009">
    <property type="entry name" value="GTP_EFTU"/>
    <property type="match status" value="1"/>
</dbReference>
<dbReference type="PRINTS" id="PR00315">
    <property type="entry name" value="ELONGATNFCT"/>
</dbReference>
<dbReference type="PRINTS" id="PR01037">
    <property type="entry name" value="TCRTETOQM"/>
</dbReference>
<dbReference type="SUPFAM" id="SSF54980">
    <property type="entry name" value="EF-G C-terminal domain-like"/>
    <property type="match status" value="2"/>
</dbReference>
<dbReference type="SUPFAM" id="SSF52540">
    <property type="entry name" value="P-loop containing nucleoside triphosphate hydrolases"/>
    <property type="match status" value="1"/>
</dbReference>
<dbReference type="SUPFAM" id="SSF54211">
    <property type="entry name" value="Ribosomal protein S5 domain 2-like"/>
    <property type="match status" value="1"/>
</dbReference>
<dbReference type="SUPFAM" id="SSF50447">
    <property type="entry name" value="Translation proteins"/>
    <property type="match status" value="1"/>
</dbReference>
<dbReference type="PROSITE" id="PS00301">
    <property type="entry name" value="G_TR_1"/>
    <property type="match status" value="1"/>
</dbReference>
<dbReference type="PROSITE" id="PS51722">
    <property type="entry name" value="G_TR_2"/>
    <property type="match status" value="1"/>
</dbReference>
<evidence type="ECO:0000250" key="1"/>
<evidence type="ECO:0000255" key="2">
    <source>
        <dbReference type="PROSITE-ProRule" id="PRU01059"/>
    </source>
</evidence>